<sequence>MIVTTTSGIQGKEIIEYIDIVNGEAIMGANIVRDLFASVRDVVGGRAGAYESKLKDARDIAMDEMKELAKQKGANAIIGIDVDYEVVRDGMLMVAVSGTAVRI</sequence>
<evidence type="ECO:0000255" key="1">
    <source>
        <dbReference type="HAMAP-Rule" id="MF_00338"/>
    </source>
</evidence>
<organism>
    <name type="scientific">Bacillus cereus (strain ATCC 14579 / DSM 31 / CCUG 7414 / JCM 2152 / NBRC 15305 / NCIMB 9373 / NCTC 2599 / NRRL B-3711)</name>
    <dbReference type="NCBI Taxonomy" id="226900"/>
    <lineage>
        <taxon>Bacteria</taxon>
        <taxon>Bacillati</taxon>
        <taxon>Bacillota</taxon>
        <taxon>Bacilli</taxon>
        <taxon>Bacillales</taxon>
        <taxon>Bacillaceae</taxon>
        <taxon>Bacillus</taxon>
        <taxon>Bacillus cereus group</taxon>
    </lineage>
</organism>
<reference key="1">
    <citation type="journal article" date="2003" name="Nature">
        <title>Genome sequence of Bacillus cereus and comparative analysis with Bacillus anthracis.</title>
        <authorList>
            <person name="Ivanova N."/>
            <person name="Sorokin A."/>
            <person name="Anderson I."/>
            <person name="Galleron N."/>
            <person name="Candelon B."/>
            <person name="Kapatral V."/>
            <person name="Bhattacharyya A."/>
            <person name="Reznik G."/>
            <person name="Mikhailova N."/>
            <person name="Lapidus A."/>
            <person name="Chu L."/>
            <person name="Mazur M."/>
            <person name="Goltsman E."/>
            <person name="Larsen N."/>
            <person name="D'Souza M."/>
            <person name="Walunas T."/>
            <person name="Grechkin Y."/>
            <person name="Pusch G."/>
            <person name="Haselkorn R."/>
            <person name="Fonstein M."/>
            <person name="Ehrlich S.D."/>
            <person name="Overbeek R."/>
            <person name="Kyrpides N.C."/>
        </authorList>
    </citation>
    <scope>NUCLEOTIDE SEQUENCE [LARGE SCALE GENOMIC DNA]</scope>
    <source>
        <strain>ATCC 14579 / DSM 31 / CCUG 7414 / JCM 2152 / NBRC 15305 / NCIMB 9373 / NCTC 2599 / NRRL B-3711</strain>
    </source>
</reference>
<accession>Q81EZ2</accession>
<protein>
    <recommendedName>
        <fullName evidence="1">UPF0145 protein BC_1816</fullName>
    </recommendedName>
</protein>
<feature type="chain" id="PRO_0000225805" description="UPF0145 protein BC_1816">
    <location>
        <begin position="1"/>
        <end position="103"/>
    </location>
</feature>
<keyword id="KW-1185">Reference proteome</keyword>
<gene>
    <name type="ordered locus">BC_1816</name>
</gene>
<proteinExistence type="inferred from homology"/>
<comment type="similarity">
    <text evidence="1">Belongs to the UPF0145 family.</text>
</comment>
<dbReference type="EMBL" id="AE016877">
    <property type="protein sequence ID" value="AAP08790.1"/>
    <property type="molecule type" value="Genomic_DNA"/>
</dbReference>
<dbReference type="RefSeq" id="NP_831589.1">
    <property type="nucleotide sequence ID" value="NC_004722.1"/>
</dbReference>
<dbReference type="RefSeq" id="WP_000637504.1">
    <property type="nucleotide sequence ID" value="NC_004722.1"/>
</dbReference>
<dbReference type="SMR" id="Q81EZ2"/>
<dbReference type="KEGG" id="bce:BC1816"/>
<dbReference type="PATRIC" id="fig|226900.8.peg.1807"/>
<dbReference type="HOGENOM" id="CLU_117144_3_2_9"/>
<dbReference type="OrthoDB" id="9796448at2"/>
<dbReference type="Proteomes" id="UP000001417">
    <property type="component" value="Chromosome"/>
</dbReference>
<dbReference type="Gene3D" id="3.30.110.70">
    <property type="entry name" value="Hypothetical protein apc22750. Chain B"/>
    <property type="match status" value="1"/>
</dbReference>
<dbReference type="HAMAP" id="MF_00338">
    <property type="entry name" value="UPF0145"/>
    <property type="match status" value="1"/>
</dbReference>
<dbReference type="InterPro" id="IPR035439">
    <property type="entry name" value="UPF0145_dom_sf"/>
</dbReference>
<dbReference type="InterPro" id="IPR002765">
    <property type="entry name" value="UPF0145_YbjQ-like"/>
</dbReference>
<dbReference type="NCBIfam" id="NF009495">
    <property type="entry name" value="PRK12855.1"/>
    <property type="match status" value="1"/>
</dbReference>
<dbReference type="NCBIfam" id="NF009496">
    <property type="entry name" value="PRK12856.1"/>
    <property type="match status" value="1"/>
</dbReference>
<dbReference type="PANTHER" id="PTHR34068">
    <property type="entry name" value="UPF0145 PROTEIN YBJQ"/>
    <property type="match status" value="1"/>
</dbReference>
<dbReference type="PANTHER" id="PTHR34068:SF1">
    <property type="entry name" value="UPF0145 PROTEIN YBJQ"/>
    <property type="match status" value="1"/>
</dbReference>
<dbReference type="Pfam" id="PF01906">
    <property type="entry name" value="YbjQ_1"/>
    <property type="match status" value="1"/>
</dbReference>
<dbReference type="SUPFAM" id="SSF117782">
    <property type="entry name" value="YbjQ-like"/>
    <property type="match status" value="1"/>
</dbReference>
<name>Y1816_BACCR</name>